<gene>
    <name evidence="1" type="primary">atpA</name>
    <name type="ordered locus">MARTH_orf046</name>
</gene>
<dbReference type="EC" id="7.1.2.2" evidence="1"/>
<dbReference type="EMBL" id="CP001047">
    <property type="protein sequence ID" value="ACF07008.1"/>
    <property type="molecule type" value="Genomic_DNA"/>
</dbReference>
<dbReference type="RefSeq" id="WP_012497965.1">
    <property type="nucleotide sequence ID" value="NC_011025.1"/>
</dbReference>
<dbReference type="SMR" id="B3PLV6"/>
<dbReference type="STRING" id="243272.MARTH_orf046"/>
<dbReference type="KEGG" id="mat:MARTH_orf046"/>
<dbReference type="eggNOG" id="COG0056">
    <property type="taxonomic scope" value="Bacteria"/>
</dbReference>
<dbReference type="HOGENOM" id="CLU_010091_2_1_14"/>
<dbReference type="Proteomes" id="UP000008812">
    <property type="component" value="Chromosome"/>
</dbReference>
<dbReference type="GO" id="GO:0005886">
    <property type="term" value="C:plasma membrane"/>
    <property type="evidence" value="ECO:0007669"/>
    <property type="project" value="UniProtKB-SubCell"/>
</dbReference>
<dbReference type="GO" id="GO:0045259">
    <property type="term" value="C:proton-transporting ATP synthase complex"/>
    <property type="evidence" value="ECO:0007669"/>
    <property type="project" value="UniProtKB-KW"/>
</dbReference>
<dbReference type="GO" id="GO:0043531">
    <property type="term" value="F:ADP binding"/>
    <property type="evidence" value="ECO:0007669"/>
    <property type="project" value="TreeGrafter"/>
</dbReference>
<dbReference type="GO" id="GO:0005524">
    <property type="term" value="F:ATP binding"/>
    <property type="evidence" value="ECO:0007669"/>
    <property type="project" value="UniProtKB-UniRule"/>
</dbReference>
<dbReference type="GO" id="GO:0046933">
    <property type="term" value="F:proton-transporting ATP synthase activity, rotational mechanism"/>
    <property type="evidence" value="ECO:0007669"/>
    <property type="project" value="UniProtKB-UniRule"/>
</dbReference>
<dbReference type="CDD" id="cd18113">
    <property type="entry name" value="ATP-synt_F1_alpha_C"/>
    <property type="match status" value="1"/>
</dbReference>
<dbReference type="CDD" id="cd18116">
    <property type="entry name" value="ATP-synt_F1_alpha_N"/>
    <property type="match status" value="1"/>
</dbReference>
<dbReference type="CDD" id="cd01132">
    <property type="entry name" value="F1-ATPase_alpha_CD"/>
    <property type="match status" value="1"/>
</dbReference>
<dbReference type="FunFam" id="2.40.30.20:FF:000001">
    <property type="entry name" value="ATP synthase subunit alpha"/>
    <property type="match status" value="1"/>
</dbReference>
<dbReference type="FunFam" id="3.40.50.300:FF:000002">
    <property type="entry name" value="ATP synthase subunit alpha"/>
    <property type="match status" value="1"/>
</dbReference>
<dbReference type="Gene3D" id="2.40.30.20">
    <property type="match status" value="1"/>
</dbReference>
<dbReference type="Gene3D" id="1.20.150.20">
    <property type="entry name" value="ATP synthase alpha/beta chain, C-terminal domain"/>
    <property type="match status" value="1"/>
</dbReference>
<dbReference type="Gene3D" id="3.40.50.300">
    <property type="entry name" value="P-loop containing nucleotide triphosphate hydrolases"/>
    <property type="match status" value="1"/>
</dbReference>
<dbReference type="HAMAP" id="MF_01346">
    <property type="entry name" value="ATP_synth_alpha_bact"/>
    <property type="match status" value="1"/>
</dbReference>
<dbReference type="InterPro" id="IPR023366">
    <property type="entry name" value="ATP_synth_asu-like_sf"/>
</dbReference>
<dbReference type="InterPro" id="IPR000793">
    <property type="entry name" value="ATP_synth_asu_C"/>
</dbReference>
<dbReference type="InterPro" id="IPR038376">
    <property type="entry name" value="ATP_synth_asu_C_sf"/>
</dbReference>
<dbReference type="InterPro" id="IPR033732">
    <property type="entry name" value="ATP_synth_F1_a_nt-bd_dom"/>
</dbReference>
<dbReference type="InterPro" id="IPR005294">
    <property type="entry name" value="ATP_synth_F1_asu"/>
</dbReference>
<dbReference type="InterPro" id="IPR020003">
    <property type="entry name" value="ATPase_a/bsu_AS"/>
</dbReference>
<dbReference type="InterPro" id="IPR004100">
    <property type="entry name" value="ATPase_F1/V1/A1_a/bsu_N"/>
</dbReference>
<dbReference type="InterPro" id="IPR036121">
    <property type="entry name" value="ATPase_F1/V1/A1_a/bsu_N_sf"/>
</dbReference>
<dbReference type="InterPro" id="IPR000194">
    <property type="entry name" value="ATPase_F1/V1/A1_a/bsu_nucl-bd"/>
</dbReference>
<dbReference type="InterPro" id="IPR027417">
    <property type="entry name" value="P-loop_NTPase"/>
</dbReference>
<dbReference type="NCBIfam" id="TIGR00962">
    <property type="entry name" value="atpA"/>
    <property type="match status" value="1"/>
</dbReference>
<dbReference type="NCBIfam" id="NF009884">
    <property type="entry name" value="PRK13343.1"/>
    <property type="match status" value="1"/>
</dbReference>
<dbReference type="PANTHER" id="PTHR48082">
    <property type="entry name" value="ATP SYNTHASE SUBUNIT ALPHA, MITOCHONDRIAL"/>
    <property type="match status" value="1"/>
</dbReference>
<dbReference type="PANTHER" id="PTHR48082:SF2">
    <property type="entry name" value="ATP SYNTHASE SUBUNIT ALPHA, MITOCHONDRIAL"/>
    <property type="match status" value="1"/>
</dbReference>
<dbReference type="Pfam" id="PF00006">
    <property type="entry name" value="ATP-synt_ab"/>
    <property type="match status" value="1"/>
</dbReference>
<dbReference type="Pfam" id="PF00306">
    <property type="entry name" value="ATP-synt_ab_C"/>
    <property type="match status" value="1"/>
</dbReference>
<dbReference type="Pfam" id="PF02874">
    <property type="entry name" value="ATP-synt_ab_N"/>
    <property type="match status" value="1"/>
</dbReference>
<dbReference type="SUPFAM" id="SSF47917">
    <property type="entry name" value="C-terminal domain of alpha and beta subunits of F1 ATP synthase"/>
    <property type="match status" value="1"/>
</dbReference>
<dbReference type="SUPFAM" id="SSF50615">
    <property type="entry name" value="N-terminal domain of alpha and beta subunits of F1 ATP synthase"/>
    <property type="match status" value="1"/>
</dbReference>
<dbReference type="SUPFAM" id="SSF52540">
    <property type="entry name" value="P-loop containing nucleoside triphosphate hydrolases"/>
    <property type="match status" value="1"/>
</dbReference>
<dbReference type="PROSITE" id="PS00152">
    <property type="entry name" value="ATPASE_ALPHA_BETA"/>
    <property type="match status" value="1"/>
</dbReference>
<protein>
    <recommendedName>
        <fullName evidence="1">ATP synthase subunit alpha</fullName>
        <ecNumber evidence="1">7.1.2.2</ecNumber>
    </recommendedName>
    <alternativeName>
        <fullName evidence="1">ATP synthase F1 sector subunit alpha</fullName>
    </alternativeName>
    <alternativeName>
        <fullName evidence="1">F-ATPase subunit alpha</fullName>
    </alternativeName>
</protein>
<name>ATPA_META1</name>
<keyword id="KW-0066">ATP synthesis</keyword>
<keyword id="KW-0067">ATP-binding</keyword>
<keyword id="KW-1003">Cell membrane</keyword>
<keyword id="KW-0139">CF(1)</keyword>
<keyword id="KW-0375">Hydrogen ion transport</keyword>
<keyword id="KW-0406">Ion transport</keyword>
<keyword id="KW-0472">Membrane</keyword>
<keyword id="KW-0547">Nucleotide-binding</keyword>
<keyword id="KW-1185">Reference proteome</keyword>
<keyword id="KW-1278">Translocase</keyword>
<keyword id="KW-0813">Transport</keyword>
<sequence length="527" mass="58413">MAIKATDLSAIIKAQIKDFNQNVTFDEVGRVITVGDGIALVSGLNNVEYGELVQFESGVLGMTMNLEEDLVGIVVMGDDRSIVEGNLVKRMRQVISTPVGDELLGRVVNALAKPIDGKGKINTSYHAPIFKVAPGVMARQEVNEPLETGILAIDAMIPIGKGQRELIIGDRQTGKTAIAIDTILNQKGKHVYCIYIAIGQKNSTISQIVDILNKHDALKYTTIISASAAESAPLQYIAPYTGVTIAEEWMAKGKDVLVIYDDLSKHAVAYRTLSLLLRRPPGREAYPGDVFYLHSQLLERAARLNKENGGGSITALPIIETQAEDISAYIPTNVISITDGQIFTKESLFNSGQRPAIDIGYSVSRVGSAAQTKLMKKVVSSLKLELAQYNEMLAFAQFGSDLDQNTRNILEHGAKVYELLKQPQYSPYEQIKQILILFCSKYRLINPIPKAYITKYRDELLNYFLTNSKTLQVISQLTKASDWTEELIESVWEHIMAFNESFIPTIPNLNKYQGQEIPPLPWKAYKK</sequence>
<feature type="chain" id="PRO_1000143410" description="ATP synthase subunit alpha">
    <location>
        <begin position="1"/>
        <end position="527"/>
    </location>
</feature>
<feature type="binding site" evidence="1">
    <location>
        <begin position="169"/>
        <end position="176"/>
    </location>
    <ligand>
        <name>ATP</name>
        <dbReference type="ChEBI" id="CHEBI:30616"/>
    </ligand>
</feature>
<feature type="site" description="Required for activity" evidence="1">
    <location>
        <position position="362"/>
    </location>
</feature>
<accession>B3PLV6</accession>
<organism>
    <name type="scientific">Metamycoplasma arthritidis (strain 158L3-1)</name>
    <name type="common">Mycoplasma arthritidis</name>
    <dbReference type="NCBI Taxonomy" id="243272"/>
    <lineage>
        <taxon>Bacteria</taxon>
        <taxon>Bacillati</taxon>
        <taxon>Mycoplasmatota</taxon>
        <taxon>Mycoplasmoidales</taxon>
        <taxon>Metamycoplasmataceae</taxon>
        <taxon>Metamycoplasma</taxon>
    </lineage>
</organism>
<evidence type="ECO:0000255" key="1">
    <source>
        <dbReference type="HAMAP-Rule" id="MF_01346"/>
    </source>
</evidence>
<proteinExistence type="inferred from homology"/>
<comment type="function">
    <text evidence="1">Produces ATP from ADP in the presence of a proton gradient across the membrane. The alpha chain is a regulatory subunit.</text>
</comment>
<comment type="catalytic activity">
    <reaction evidence="1">
        <text>ATP + H2O + 4 H(+)(in) = ADP + phosphate + 5 H(+)(out)</text>
        <dbReference type="Rhea" id="RHEA:57720"/>
        <dbReference type="ChEBI" id="CHEBI:15377"/>
        <dbReference type="ChEBI" id="CHEBI:15378"/>
        <dbReference type="ChEBI" id="CHEBI:30616"/>
        <dbReference type="ChEBI" id="CHEBI:43474"/>
        <dbReference type="ChEBI" id="CHEBI:456216"/>
        <dbReference type="EC" id="7.1.2.2"/>
    </reaction>
</comment>
<comment type="subunit">
    <text evidence="1">F-type ATPases have 2 components, CF(1) - the catalytic core - and CF(0) - the membrane proton channel. CF(1) has five subunits: alpha(3), beta(3), gamma(1), delta(1), epsilon(1). CF(0) has three main subunits: a(1), b(2) and c(9-12). The alpha and beta chains form an alternating ring which encloses part of the gamma chain. CF(1) is attached to CF(0) by a central stalk formed by the gamma and epsilon chains, while a peripheral stalk is formed by the delta and b chains.</text>
</comment>
<comment type="subcellular location">
    <subcellularLocation>
        <location evidence="1">Cell membrane</location>
        <topology evidence="1">Peripheral membrane protein</topology>
    </subcellularLocation>
</comment>
<comment type="similarity">
    <text evidence="1">Belongs to the ATPase alpha/beta chains family.</text>
</comment>
<reference key="1">
    <citation type="journal article" date="2008" name="Infect. Immun.">
        <title>Genome of Mycoplasma arthritidis.</title>
        <authorList>
            <person name="Dybvig K."/>
            <person name="Zuhua C."/>
            <person name="Lao P."/>
            <person name="Jordan D.S."/>
            <person name="French C.T."/>
            <person name="Tu A.H."/>
            <person name="Loraine A.E."/>
        </authorList>
    </citation>
    <scope>NUCLEOTIDE SEQUENCE [LARGE SCALE GENOMIC DNA]</scope>
    <source>
        <strain>158L3-1</strain>
    </source>
</reference>